<protein>
    <recommendedName>
        <fullName>Acetylornithine aminotransferase, mitochondrial</fullName>
        <shortName>ACOAT</shortName>
        <ecNumber>2.6.1.11</ecNumber>
    </recommendedName>
</protein>
<evidence type="ECO:0000250" key="1"/>
<evidence type="ECO:0000255" key="2"/>
<evidence type="ECO:0000305" key="3"/>
<sequence>MVNQRVVHLCAKRSFSLTASMQKYFVDVYAKPDLVLTRGRGSRLFDDVNKREYIDFVAGIAVTSLGHSDPAIAEVIAAQSATLVHTSNLFHNSEALKFAEKLVESTKRFGGQQDAEKVYFCNSGTEANEAALKFSRRRALRTDPQKQGFIAFENSFHGRTMGSLSVTSKAKYRLPFGDMVPHVTFLNIHDPVEKLVSFIVENAPKTAAMILEPIQGEGGVHRVPEDKLVALGRLCKKHDIVLIYDEIQCGLGRTGKLWAHSNLPADAHPDIFTTAKALGNGFPMGATVVNSKVNEVLSVGDHGTTYGGNPLACAVGNHVLDRIAQQPFLDDVKAKANVFTAGLLALQKKYPFIREIRGDGLLIGVEFTVDVSDIISKSRERGLLITAAGPNTLRIIPALTIEEDTIRQGLEILESVVGEISSS</sequence>
<accession>Q75AW1</accession>
<gene>
    <name type="primary">ARG8</name>
    <name type="ordered locus">ADL191W</name>
</gene>
<feature type="transit peptide" description="Mitochondrion" evidence="2">
    <location>
        <begin position="1"/>
        <end status="unknown"/>
    </location>
</feature>
<feature type="chain" id="PRO_0000002076" description="Acetylornithine aminotransferase, mitochondrial">
    <location>
        <begin status="unknown"/>
        <end position="423"/>
    </location>
</feature>
<feature type="modified residue" description="N6-(pyridoxal phosphate)lysine" evidence="1">
    <location>
        <position position="276"/>
    </location>
</feature>
<dbReference type="EC" id="2.6.1.11"/>
<dbReference type="EMBL" id="AE016817">
    <property type="protein sequence ID" value="AAS51729.1"/>
    <property type="molecule type" value="Genomic_DNA"/>
</dbReference>
<dbReference type="RefSeq" id="NP_983905.1">
    <property type="nucleotide sequence ID" value="NM_209258.1"/>
</dbReference>
<dbReference type="SMR" id="Q75AW1"/>
<dbReference type="FunCoup" id="Q75AW1">
    <property type="interactions" value="300"/>
</dbReference>
<dbReference type="STRING" id="284811.Q75AW1"/>
<dbReference type="EnsemblFungi" id="AAS51729">
    <property type="protein sequence ID" value="AAS51729"/>
    <property type="gene ID" value="AGOS_ADL191W"/>
</dbReference>
<dbReference type="GeneID" id="4620047"/>
<dbReference type="KEGG" id="ago:AGOS_ADL191W"/>
<dbReference type="eggNOG" id="KOG1401">
    <property type="taxonomic scope" value="Eukaryota"/>
</dbReference>
<dbReference type="HOGENOM" id="CLU_016922_10_1_1"/>
<dbReference type="InParanoid" id="Q75AW1"/>
<dbReference type="OMA" id="MVPGFKY"/>
<dbReference type="OrthoDB" id="5419315at2759"/>
<dbReference type="UniPathway" id="UPA00068">
    <property type="reaction ID" value="UER00109"/>
</dbReference>
<dbReference type="Proteomes" id="UP000000591">
    <property type="component" value="Chromosome IV"/>
</dbReference>
<dbReference type="GO" id="GO:0005759">
    <property type="term" value="C:mitochondrial matrix"/>
    <property type="evidence" value="ECO:0000318"/>
    <property type="project" value="GO_Central"/>
</dbReference>
<dbReference type="GO" id="GO:0042802">
    <property type="term" value="F:identical protein binding"/>
    <property type="evidence" value="ECO:0000318"/>
    <property type="project" value="GO_Central"/>
</dbReference>
<dbReference type="GO" id="GO:0003992">
    <property type="term" value="F:N2-acetyl-L-ornithine:2-oxoglutarate 5-aminotransferase activity"/>
    <property type="evidence" value="ECO:0007669"/>
    <property type="project" value="UniProtKB-EC"/>
</dbReference>
<dbReference type="GO" id="GO:0030170">
    <property type="term" value="F:pyridoxal phosphate binding"/>
    <property type="evidence" value="ECO:0000318"/>
    <property type="project" value="GO_Central"/>
</dbReference>
<dbReference type="GO" id="GO:0042450">
    <property type="term" value="P:arginine biosynthetic process via ornithine"/>
    <property type="evidence" value="ECO:0007669"/>
    <property type="project" value="EnsemblFungi"/>
</dbReference>
<dbReference type="GO" id="GO:0006526">
    <property type="term" value="P:L-arginine biosynthetic process"/>
    <property type="evidence" value="ECO:0007669"/>
    <property type="project" value="UniProtKB-UniPathway"/>
</dbReference>
<dbReference type="CDD" id="cd00610">
    <property type="entry name" value="OAT_like"/>
    <property type="match status" value="1"/>
</dbReference>
<dbReference type="FunFam" id="3.40.640.10:FF:000004">
    <property type="entry name" value="Acetylornithine aminotransferase"/>
    <property type="match status" value="1"/>
</dbReference>
<dbReference type="Gene3D" id="3.90.1150.10">
    <property type="entry name" value="Aspartate Aminotransferase, domain 1"/>
    <property type="match status" value="1"/>
</dbReference>
<dbReference type="Gene3D" id="3.40.640.10">
    <property type="entry name" value="Type I PLP-dependent aspartate aminotransferase-like (Major domain)"/>
    <property type="match status" value="1"/>
</dbReference>
<dbReference type="HAMAP" id="MF_01107">
    <property type="entry name" value="ArgD_aminotrans_3"/>
    <property type="match status" value="1"/>
</dbReference>
<dbReference type="InterPro" id="IPR004636">
    <property type="entry name" value="AcOrn/SuccOrn_fam"/>
</dbReference>
<dbReference type="InterPro" id="IPR005814">
    <property type="entry name" value="Aminotrans_3"/>
</dbReference>
<dbReference type="InterPro" id="IPR049704">
    <property type="entry name" value="Aminotrans_3_PPA_site"/>
</dbReference>
<dbReference type="InterPro" id="IPR050103">
    <property type="entry name" value="Class-III_PLP-dep_AT"/>
</dbReference>
<dbReference type="InterPro" id="IPR015424">
    <property type="entry name" value="PyrdxlP-dep_Trfase"/>
</dbReference>
<dbReference type="InterPro" id="IPR015421">
    <property type="entry name" value="PyrdxlP-dep_Trfase_major"/>
</dbReference>
<dbReference type="InterPro" id="IPR015422">
    <property type="entry name" value="PyrdxlP-dep_Trfase_small"/>
</dbReference>
<dbReference type="NCBIfam" id="TIGR00707">
    <property type="entry name" value="argD"/>
    <property type="match status" value="1"/>
</dbReference>
<dbReference type="NCBIfam" id="NF002325">
    <property type="entry name" value="PRK01278.1"/>
    <property type="match status" value="1"/>
</dbReference>
<dbReference type="PANTHER" id="PTHR11986:SF79">
    <property type="entry name" value="ACETYLORNITHINE AMINOTRANSFERASE, MITOCHONDRIAL"/>
    <property type="match status" value="1"/>
</dbReference>
<dbReference type="PANTHER" id="PTHR11986">
    <property type="entry name" value="AMINOTRANSFERASE CLASS III"/>
    <property type="match status" value="1"/>
</dbReference>
<dbReference type="Pfam" id="PF00202">
    <property type="entry name" value="Aminotran_3"/>
    <property type="match status" value="1"/>
</dbReference>
<dbReference type="PIRSF" id="PIRSF000521">
    <property type="entry name" value="Transaminase_4ab_Lys_Orn"/>
    <property type="match status" value="1"/>
</dbReference>
<dbReference type="SUPFAM" id="SSF53383">
    <property type="entry name" value="PLP-dependent transferases"/>
    <property type="match status" value="1"/>
</dbReference>
<dbReference type="PROSITE" id="PS00600">
    <property type="entry name" value="AA_TRANSFER_CLASS_3"/>
    <property type="match status" value="1"/>
</dbReference>
<comment type="catalytic activity">
    <reaction>
        <text>N(2)-acetyl-L-ornithine + 2-oxoglutarate = N-acetyl-L-glutamate 5-semialdehyde + L-glutamate</text>
        <dbReference type="Rhea" id="RHEA:18049"/>
        <dbReference type="ChEBI" id="CHEBI:16810"/>
        <dbReference type="ChEBI" id="CHEBI:29123"/>
        <dbReference type="ChEBI" id="CHEBI:29985"/>
        <dbReference type="ChEBI" id="CHEBI:57805"/>
        <dbReference type="EC" id="2.6.1.11"/>
    </reaction>
</comment>
<comment type="cofactor">
    <cofactor evidence="1">
        <name>pyridoxal 5'-phosphate</name>
        <dbReference type="ChEBI" id="CHEBI:597326"/>
    </cofactor>
</comment>
<comment type="pathway">
    <text>Amino-acid biosynthesis; L-arginine biosynthesis; N(2)-acetyl-L-ornithine from L-glutamate: step 4/4.</text>
</comment>
<comment type="subcellular location">
    <subcellularLocation>
        <location evidence="1">Mitochondrion matrix</location>
    </subcellularLocation>
</comment>
<comment type="similarity">
    <text evidence="3">Belongs to the class-III pyridoxal-phosphate-dependent aminotransferase family.</text>
</comment>
<organism>
    <name type="scientific">Eremothecium gossypii (strain ATCC 10895 / CBS 109.51 / FGSC 9923 / NRRL Y-1056)</name>
    <name type="common">Yeast</name>
    <name type="synonym">Ashbya gossypii</name>
    <dbReference type="NCBI Taxonomy" id="284811"/>
    <lineage>
        <taxon>Eukaryota</taxon>
        <taxon>Fungi</taxon>
        <taxon>Dikarya</taxon>
        <taxon>Ascomycota</taxon>
        <taxon>Saccharomycotina</taxon>
        <taxon>Saccharomycetes</taxon>
        <taxon>Saccharomycetales</taxon>
        <taxon>Saccharomycetaceae</taxon>
        <taxon>Eremothecium</taxon>
    </lineage>
</organism>
<proteinExistence type="inferred from homology"/>
<reference key="1">
    <citation type="journal article" date="2004" name="Science">
        <title>The Ashbya gossypii genome as a tool for mapping the ancient Saccharomyces cerevisiae genome.</title>
        <authorList>
            <person name="Dietrich F.S."/>
            <person name="Voegeli S."/>
            <person name="Brachat S."/>
            <person name="Lerch A."/>
            <person name="Gates K."/>
            <person name="Steiner S."/>
            <person name="Mohr C."/>
            <person name="Poehlmann R."/>
            <person name="Luedi P."/>
            <person name="Choi S."/>
            <person name="Wing R.A."/>
            <person name="Flavier A."/>
            <person name="Gaffney T.D."/>
            <person name="Philippsen P."/>
        </authorList>
    </citation>
    <scope>NUCLEOTIDE SEQUENCE [LARGE SCALE GENOMIC DNA]</scope>
    <source>
        <strain>ATCC 10895 / CBS 109.51 / FGSC 9923 / NRRL Y-1056</strain>
    </source>
</reference>
<reference key="2">
    <citation type="journal article" date="2013" name="G3 (Bethesda)">
        <title>Genomes of Ashbya fungi isolated from insects reveal four mating-type loci, numerous translocations, lack of transposons, and distinct gene duplications.</title>
        <authorList>
            <person name="Dietrich F.S."/>
            <person name="Voegeli S."/>
            <person name="Kuo S."/>
            <person name="Philippsen P."/>
        </authorList>
    </citation>
    <scope>GENOME REANNOTATION</scope>
    <source>
        <strain>ATCC 10895 / CBS 109.51 / FGSC 9923 / NRRL Y-1056</strain>
    </source>
</reference>
<name>ARGD_EREGS</name>
<keyword id="KW-0028">Amino-acid biosynthesis</keyword>
<keyword id="KW-0032">Aminotransferase</keyword>
<keyword id="KW-0055">Arginine biosynthesis</keyword>
<keyword id="KW-0496">Mitochondrion</keyword>
<keyword id="KW-0663">Pyridoxal phosphate</keyword>
<keyword id="KW-1185">Reference proteome</keyword>
<keyword id="KW-0808">Transferase</keyword>
<keyword id="KW-0809">Transit peptide</keyword>